<organism>
    <name type="scientific">Cyanothece sp. (strain PCC 7425 / ATCC 29141)</name>
    <dbReference type="NCBI Taxonomy" id="395961"/>
    <lineage>
        <taxon>Bacteria</taxon>
        <taxon>Bacillati</taxon>
        <taxon>Cyanobacteriota</taxon>
        <taxon>Cyanophyceae</taxon>
        <taxon>Gomontiellales</taxon>
        <taxon>Cyanothecaceae</taxon>
        <taxon>Cyanothece</taxon>
    </lineage>
</organism>
<protein>
    <recommendedName>
        <fullName evidence="1">Cytochrome b559 subunit beta</fullName>
    </recommendedName>
    <alternativeName>
        <fullName evidence="1">PSII reaction center subunit VI</fullName>
    </alternativeName>
</protein>
<dbReference type="EMBL" id="CP001344">
    <property type="protein sequence ID" value="ACL44590.1"/>
    <property type="molecule type" value="Genomic_DNA"/>
</dbReference>
<dbReference type="SMR" id="B8HVD8"/>
<dbReference type="STRING" id="395961.Cyan7425_2229"/>
<dbReference type="KEGG" id="cyn:Cyan7425_2229"/>
<dbReference type="eggNOG" id="ENOG50332KX">
    <property type="taxonomic scope" value="Bacteria"/>
</dbReference>
<dbReference type="HOGENOM" id="CLU_211753_1_0_3"/>
<dbReference type="OrthoDB" id="532613at2"/>
<dbReference type="GO" id="GO:0009539">
    <property type="term" value="C:photosystem II reaction center"/>
    <property type="evidence" value="ECO:0007669"/>
    <property type="project" value="InterPro"/>
</dbReference>
<dbReference type="GO" id="GO:0031676">
    <property type="term" value="C:plasma membrane-derived thylakoid membrane"/>
    <property type="evidence" value="ECO:0007669"/>
    <property type="project" value="UniProtKB-SubCell"/>
</dbReference>
<dbReference type="GO" id="GO:0009055">
    <property type="term" value="F:electron transfer activity"/>
    <property type="evidence" value="ECO:0007669"/>
    <property type="project" value="UniProtKB-UniRule"/>
</dbReference>
<dbReference type="GO" id="GO:0020037">
    <property type="term" value="F:heme binding"/>
    <property type="evidence" value="ECO:0007669"/>
    <property type="project" value="InterPro"/>
</dbReference>
<dbReference type="GO" id="GO:0005506">
    <property type="term" value="F:iron ion binding"/>
    <property type="evidence" value="ECO:0007669"/>
    <property type="project" value="UniProtKB-UniRule"/>
</dbReference>
<dbReference type="GO" id="GO:0009767">
    <property type="term" value="P:photosynthetic electron transport chain"/>
    <property type="evidence" value="ECO:0007669"/>
    <property type="project" value="InterPro"/>
</dbReference>
<dbReference type="HAMAP" id="MF_00643">
    <property type="entry name" value="PSII_PsbF"/>
    <property type="match status" value="1"/>
</dbReference>
<dbReference type="InterPro" id="IPR006241">
    <property type="entry name" value="PSII_cyt_b559_bsu"/>
</dbReference>
<dbReference type="InterPro" id="IPR006216">
    <property type="entry name" value="PSII_cyt_b559_CS"/>
</dbReference>
<dbReference type="InterPro" id="IPR013081">
    <property type="entry name" value="PSII_cyt_b559_N"/>
</dbReference>
<dbReference type="NCBIfam" id="TIGR01333">
    <property type="entry name" value="cyt_b559_beta"/>
    <property type="match status" value="1"/>
</dbReference>
<dbReference type="Pfam" id="PF00283">
    <property type="entry name" value="Cytochrom_B559"/>
    <property type="match status" value="1"/>
</dbReference>
<dbReference type="PIRSF" id="PIRSF000037">
    <property type="entry name" value="PsbF"/>
    <property type="match status" value="1"/>
</dbReference>
<dbReference type="SUPFAM" id="SSF161045">
    <property type="entry name" value="Cytochrome b559 subunits"/>
    <property type="match status" value="1"/>
</dbReference>
<dbReference type="PROSITE" id="PS00537">
    <property type="entry name" value="CYTOCHROME_B559"/>
    <property type="match status" value="1"/>
</dbReference>
<keyword id="KW-0249">Electron transport</keyword>
<keyword id="KW-0349">Heme</keyword>
<keyword id="KW-0408">Iron</keyword>
<keyword id="KW-0472">Membrane</keyword>
<keyword id="KW-0479">Metal-binding</keyword>
<keyword id="KW-0602">Photosynthesis</keyword>
<keyword id="KW-0604">Photosystem II</keyword>
<keyword id="KW-0793">Thylakoid</keyword>
<keyword id="KW-0812">Transmembrane</keyword>
<keyword id="KW-1133">Transmembrane helix</keyword>
<keyword id="KW-0813">Transport</keyword>
<gene>
    <name evidence="1" type="primary">psbF</name>
    <name type="ordered locus">Cyan7425_2229</name>
</gene>
<accession>B8HVD8</accession>
<evidence type="ECO:0000255" key="1">
    <source>
        <dbReference type="HAMAP-Rule" id="MF_00643"/>
    </source>
</evidence>
<proteinExistence type="inferred from homology"/>
<name>PSBF_CYAP4</name>
<reference key="1">
    <citation type="journal article" date="2011" name="MBio">
        <title>Novel metabolic attributes of the genus Cyanothece, comprising a group of unicellular nitrogen-fixing Cyanobacteria.</title>
        <authorList>
            <person name="Bandyopadhyay A."/>
            <person name="Elvitigala T."/>
            <person name="Welsh E."/>
            <person name="Stockel J."/>
            <person name="Liberton M."/>
            <person name="Min H."/>
            <person name="Sherman L.A."/>
            <person name="Pakrasi H.B."/>
        </authorList>
    </citation>
    <scope>NUCLEOTIDE SEQUENCE [LARGE SCALE GENOMIC DNA]</scope>
    <source>
        <strain>PCC 7425 / ATCC 29141</strain>
    </source>
</reference>
<comment type="function">
    <text evidence="1">This b-type cytochrome is tightly associated with the reaction center of photosystem II (PSII). PSII is a light-driven water:plastoquinone oxidoreductase that uses light energy to abstract electrons from H(2)O, generating O(2) and a proton gradient subsequently used for ATP formation. It consists of a core antenna complex that captures photons, and an electron transfer chain that converts photonic excitation into a charge separation.</text>
</comment>
<comment type="cofactor">
    <cofactor evidence="1">
        <name>heme b</name>
        <dbReference type="ChEBI" id="CHEBI:60344"/>
    </cofactor>
    <text evidence="1">With its partner (PsbE) binds heme. PSII binds additional chlorophylls, carotenoids and specific lipids.</text>
</comment>
<comment type="subunit">
    <text evidence="1">Heterodimer of an alpha subunit and a beta subunit. PSII is composed of 1 copy each of membrane proteins PsbA, PsbB, PsbC, PsbD, PsbE, PsbF, PsbH, PsbI, PsbJ, PsbK, PsbL, PsbM, PsbT, PsbX, PsbY, PsbZ, Psb30/Ycf12, peripheral proteins PsbO, CyanoQ (PsbQ), PsbU, PsbV and a large number of cofactors. It forms dimeric complexes.</text>
</comment>
<comment type="subcellular location">
    <subcellularLocation>
        <location evidence="1">Cellular thylakoid membrane</location>
        <topology evidence="1">Single-pass membrane protein</topology>
    </subcellularLocation>
</comment>
<comment type="similarity">
    <text evidence="1">Belongs to the PsbE/PsbF family.</text>
</comment>
<sequence>MTTRNPNQPVSYPIFTVRWIAVHTLAVPSVFFLGAIAAMQFIHR</sequence>
<feature type="chain" id="PRO_1000147431" description="Cytochrome b559 subunit beta">
    <location>
        <begin position="1"/>
        <end position="44"/>
    </location>
</feature>
<feature type="transmembrane region" description="Helical" evidence="1">
    <location>
        <begin position="19"/>
        <end position="35"/>
    </location>
</feature>
<feature type="binding site" description="axial binding residue" evidence="1">
    <location>
        <position position="23"/>
    </location>
    <ligand>
        <name>heme</name>
        <dbReference type="ChEBI" id="CHEBI:30413"/>
        <note>ligand shared with alpha subunit</note>
    </ligand>
    <ligandPart>
        <name>Fe</name>
        <dbReference type="ChEBI" id="CHEBI:18248"/>
    </ligandPart>
</feature>